<dbReference type="EMBL" id="X04451">
    <property type="protein sequence ID" value="CAA28050.1"/>
    <property type="status" value="ALT_SEQ"/>
    <property type="molecule type" value="Genomic_RNA"/>
</dbReference>
<dbReference type="PIR" id="A26176">
    <property type="entry name" value="SAVLDV"/>
</dbReference>
<dbReference type="SMR" id="P06934"/>
<dbReference type="Proteomes" id="UP000008106">
    <property type="component" value="Genome"/>
</dbReference>
<dbReference type="GO" id="GO:0043657">
    <property type="term" value="C:host cell"/>
    <property type="evidence" value="ECO:0007669"/>
    <property type="project" value="GOC"/>
</dbReference>
<dbReference type="GO" id="GO:0042025">
    <property type="term" value="C:host cell nucleus"/>
    <property type="evidence" value="ECO:0007669"/>
    <property type="project" value="UniProtKB-SubCell"/>
</dbReference>
<dbReference type="GO" id="GO:0044423">
    <property type="term" value="C:virion component"/>
    <property type="evidence" value="ECO:0007669"/>
    <property type="project" value="UniProtKB-KW"/>
</dbReference>
<dbReference type="GO" id="GO:0003723">
    <property type="term" value="F:RNA binding"/>
    <property type="evidence" value="ECO:0007669"/>
    <property type="project" value="UniProtKB-KW"/>
</dbReference>
<dbReference type="GO" id="GO:0046718">
    <property type="term" value="P:symbiont entry into host cell"/>
    <property type="evidence" value="ECO:0007669"/>
    <property type="project" value="UniProtKB-KW"/>
</dbReference>
<dbReference type="GO" id="GO:0075732">
    <property type="term" value="P:viral penetration into host nucleus"/>
    <property type="evidence" value="ECO:0007669"/>
    <property type="project" value="UniProtKB-KW"/>
</dbReference>
<dbReference type="Gene3D" id="4.10.220.40">
    <property type="entry name" value="Delta antigen, N-terminal"/>
    <property type="match status" value="1"/>
</dbReference>
<dbReference type="InterPro" id="IPR027403">
    <property type="entry name" value="Delta_antigen_N"/>
</dbReference>
<dbReference type="InterPro" id="IPR037517">
    <property type="entry name" value="HDAG_dom"/>
</dbReference>
<dbReference type="InterPro" id="IPR002506">
    <property type="entry name" value="HDV_ag"/>
</dbReference>
<dbReference type="Pfam" id="PF01517">
    <property type="entry name" value="HDV_ag"/>
    <property type="match status" value="1"/>
</dbReference>
<dbReference type="SUPFAM" id="SSF58108">
    <property type="entry name" value="Oligomerization domain of hepatitis delta antigen"/>
    <property type="match status" value="1"/>
</dbReference>
<dbReference type="PROSITE" id="PS51838">
    <property type="entry name" value="HDAG"/>
    <property type="match status" value="1"/>
</dbReference>
<organismHost>
    <name type="scientific">Homo sapiens</name>
    <name type="common">Human</name>
    <dbReference type="NCBI Taxonomy" id="9606"/>
</organismHost>
<proteinExistence type="evidence at protein level"/>
<name>SHDAG_HDVIT</name>
<protein>
    <recommendedName>
        <fullName>Small delta antigen</fullName>
        <shortName>S-HDAg</shortName>
    </recommendedName>
    <alternativeName>
        <fullName>p24</fullName>
    </alternativeName>
</protein>
<feature type="chain" id="PRO_0000038133" description="Small delta antigen">
    <location>
        <begin position="1"/>
        <end position="195"/>
    </location>
</feature>
<feature type="domain" description="HDAg" evidence="4">
    <location>
        <begin position="20"/>
        <end position="195"/>
    </location>
</feature>
<feature type="region of interest" description="Dimerization" evidence="3">
    <location>
        <begin position="12"/>
        <end position="60"/>
    </location>
</feature>
<feature type="region of interest" description="Disordered" evidence="5">
    <location>
        <begin position="45"/>
        <end position="195"/>
    </location>
</feature>
<feature type="region of interest" description="RNA-binding" evidence="4">
    <location>
        <begin position="97"/>
        <end position="107"/>
    </location>
</feature>
<feature type="region of interest" description="RNAPII-binding" evidence="4">
    <location>
        <begin position="130"/>
        <end position="195"/>
    </location>
</feature>
<feature type="region of interest" description="RNA-binding" evidence="4">
    <location>
        <begin position="136"/>
        <end position="146"/>
    </location>
</feature>
<feature type="short sequence motif" description="Nuclear localization signal" evidence="2">
    <location>
        <begin position="66"/>
        <end position="75"/>
    </location>
</feature>
<feature type="compositionally biased region" description="Basic and acidic residues" evidence="5">
    <location>
        <begin position="94"/>
        <end position="112"/>
    </location>
</feature>
<feature type="compositionally biased region" description="Basic and acidic residues" evidence="5">
    <location>
        <begin position="129"/>
        <end position="144"/>
    </location>
</feature>
<feature type="compositionally biased region" description="Gly residues" evidence="5">
    <location>
        <begin position="158"/>
        <end position="167"/>
    </location>
</feature>
<feature type="compositionally biased region" description="Basic and acidic residues" evidence="5">
    <location>
        <begin position="184"/>
        <end position="195"/>
    </location>
</feature>
<feature type="modified residue" description="Phosphoserine; by host CK2" evidence="2">
    <location>
        <position position="2"/>
    </location>
</feature>
<feature type="modified residue" description="Omega-N-methylated arginine; by host PRMT1" evidence="2">
    <location>
        <position position="13"/>
    </location>
</feature>
<feature type="modified residue" description="N6-acetyllysine; by host" evidence="2">
    <location>
        <position position="72"/>
    </location>
</feature>
<feature type="modified residue" description="Phosphoserine; by host" evidence="2">
    <location>
        <position position="123"/>
    </location>
</feature>
<feature type="modified residue" description="Phosphoserine; by host MAPK1 and MAPK3" evidence="2">
    <location>
        <position position="177"/>
    </location>
</feature>
<feature type="modified residue" description="Phosphothreonine; by host" evidence="2">
    <location>
        <position position="182"/>
    </location>
</feature>
<accession>P06934</accession>
<sequence length="195" mass="21895">MSRSESRKNRGGREEILEQWVAGRKKLEELERDLRKTKKKLKKIEDENPWLGNIKGILGKKDKDGEGAPPAKRARTDQMEVDSGPRKRPLRGGFTDKERQDHRRRKALENKKKQLSAGGKNLSKEEEEELRRLTEEDERRERRVAGPPVGGVIPLEGGSRGAPGGGFVPSLQGVPESPFSRTGEGLDIRGNRGFP</sequence>
<evidence type="ECO:0000250" key="1"/>
<evidence type="ECO:0000250" key="2">
    <source>
        <dbReference type="UniProtKB" id="P0C6L3"/>
    </source>
</evidence>
<evidence type="ECO:0000255" key="3"/>
<evidence type="ECO:0000255" key="4">
    <source>
        <dbReference type="PROSITE-ProRule" id="PRU01183"/>
    </source>
</evidence>
<evidence type="ECO:0000256" key="5">
    <source>
        <dbReference type="SAM" id="MobiDB-lite"/>
    </source>
</evidence>
<evidence type="ECO:0000269" key="6">
    <source>
    </source>
</evidence>
<evidence type="ECO:0000305" key="7"/>
<organism>
    <name type="scientific">Hepatitis delta virus genotype I (isolate Italian)</name>
    <name type="common">HDV</name>
    <dbReference type="NCBI Taxonomy" id="10423"/>
    <lineage>
        <taxon>Viruses</taxon>
        <taxon>Ribozyviria</taxon>
        <taxon>Kolmioviridae</taxon>
        <taxon>Deltavirus</taxon>
        <taxon>Hepatitis delta virus</taxon>
    </lineage>
</organism>
<keyword id="KW-0007">Acetylation</keyword>
<keyword id="KW-1048">Host nucleus</keyword>
<keyword id="KW-0945">Host-virus interaction</keyword>
<keyword id="KW-0488">Methylation</keyword>
<keyword id="KW-0597">Phosphoprotein</keyword>
<keyword id="KW-0691">RNA editing</keyword>
<keyword id="KW-0694">RNA-binding</keyword>
<keyword id="KW-1163">Viral penetration into host nucleus</keyword>
<keyword id="KW-0946">Virion</keyword>
<keyword id="KW-1160">Virus entry into host cell</keyword>
<reference key="1">
    <citation type="journal article" date="1986" name="Nature">
        <title>Structure, sequence and expression of the hepatitis delta (delta) viral genome.</title>
        <authorList>
            <person name="Wang K.S."/>
            <person name="Choo Q.L."/>
            <person name="Weiner A.J."/>
            <person name="Ou J.H."/>
            <person name="Najarian R.C."/>
            <person name="Thayer R.M."/>
            <person name="Mullenbach G.T."/>
            <person name="Denniston K.J."/>
            <person name="Gerin J.L."/>
            <person name="Houghton M."/>
        </authorList>
    </citation>
    <scope>NUCLEOTIDE SEQUENCE [GENOMIC RNA]</scope>
</reference>
<reference key="2">
    <citation type="journal article" date="1987" name="Nature">
        <authorList>
            <person name="Wang K.S."/>
            <person name="Choo Q.L."/>
            <person name="Weiner A.J."/>
            <person name="Ou J.H."/>
            <person name="Najarian R.C."/>
            <person name="Thayer R.M."/>
            <person name="Mullenbach G.T."/>
            <person name="Denniston K.J."/>
            <person name="Gerin J.L."/>
            <person name="Houghton M."/>
        </authorList>
    </citation>
    <scope>ERRATUM OF PUBMED:3762705</scope>
    <scope>SEQUENCE REVISION TO 162-214</scope>
</reference>
<reference key="3">
    <citation type="journal article" date="1988" name="J. Virol.">
        <title>Human hepatitis delta antigen is a nuclear phosphoprotein with RNA-binding activity.</title>
        <authorList>
            <person name="Chang M.F."/>
            <person name="Baker S.C."/>
            <person name="Soe L.H."/>
            <person name="Kamahora T."/>
            <person name="Keck J.G."/>
            <person name="Makino S."/>
            <person name="Govindarajan S."/>
            <person name="Lai M.M.C."/>
        </authorList>
    </citation>
    <scope>SUBCELLULAR LOCATION</scope>
    <scope>PHOSPHORYLATION</scope>
</reference>
<reference key="4">
    <citation type="journal article" date="1990" name="J. Virol.">
        <title>Characterization of hepatitis delta antigen: specific binding to hepatitis delta virus RNA.</title>
        <authorList>
            <person name="Lin J.-H."/>
            <person name="Chang M.F."/>
            <person name="Baker S.C."/>
            <person name="Govindarajan S."/>
            <person name="Lai M.M.C."/>
        </authorList>
    </citation>
    <scope>RNA-BINDING SPECIFICITY</scope>
</reference>
<reference key="5">
    <citation type="journal article" date="2005" name="Acta Virol.">
        <title>Hepatitis D.</title>
        <authorList>
            <person name="Husa P."/>
            <person name="Linhartova A."/>
            <person name="Nemecek V."/>
            <person name="Husova L."/>
        </authorList>
    </citation>
    <scope>REVIEW</scope>
</reference>
<reference key="6">
    <citation type="journal article" date="2006" name="Curr. Top. Microbiol. Immunol.">
        <title>Post-translational modification of delta antigen of hepatitis D virus.</title>
        <authorList>
            <person name="Huang W.H."/>
            <person name="Chen C.W."/>
            <person name="Wu H.L."/>
            <person name="Chen P.J."/>
        </authorList>
    </citation>
    <scope>REVIEW</scope>
</reference>
<comment type="function">
    <text evidence="1">Promotes both transcription and replication of genomic RNA. Following virus entry into host cell, provides nuclear import of HDV RNPs thanks to its nuclear localization signal. May interact with host RNA polymerase II thereby changing its template requirement from DNA to RNA. RNA pol II complex would then acts as an RNA-directed RNA polymerase, and transcribe and replicate HDV genome (By similarity).</text>
</comment>
<comment type="subunit">
    <text evidence="1">Homodimer. Homooctamer. Interacts with host RNA polymerase II complex, and with host NPM1.</text>
</comment>
<comment type="subcellular location">
    <subcellularLocation>
        <location evidence="6">Virion</location>
    </subcellularLocation>
    <subcellularLocation>
        <location evidence="1">Host nucleus</location>
    </subcellularLocation>
</comment>
<comment type="PTM">
    <text evidence="1">Phosphorylated at serines and threonines by host MAPK1/3, PKR, and CK2.</text>
</comment>
<comment type="PTM">
    <text evidence="1">Acetylation modulates nuclear localization. Neo-synthesized genomic RNA migrates from the nucleus to the cytoplasm, where they interact with S-HDAg, which once acetylated redirect both partners to the nucleus (By similarity).</text>
</comment>
<comment type="PTM">
    <text evidence="1">Methylation plays a role in viral genome replication.</text>
</comment>
<comment type="RNA editing">
    <location>
        <position position="196" evidence="1"/>
    </location>
    <text evidence="1">Partially edited. RNA editing at this position occurs on the antigenomic strand and consists of a conversion of A to G catalyzed by the cellular enzyme ADAR1. The unedited RNA version gives rise to the small delta antigen, which ends with a nonsense codon at position 196. In the edited version, this amber codon is modified to a tryptophan codon and gives rise to the large delta antigen protein (AC P0C6L6). S-HDAg suppresses editing of non-replicating antigenomic RNA, thereby regulating the extent of editing (By similarity).</text>
</comment>
<comment type="miscellaneous">
    <text>This strain belongs to the genotype I found in North America, Europe, Africa, East and West Asia and the South Pacific.</text>
</comment>
<comment type="similarity">
    <text evidence="7">Belongs to the hepatitis delta antigen family.</text>
</comment>